<proteinExistence type="evidence at transcript level"/>
<evidence type="ECO:0000250" key="1"/>
<evidence type="ECO:0000255" key="2"/>
<evidence type="ECO:0000255" key="3">
    <source>
        <dbReference type="PROSITE-ProRule" id="PRU00031"/>
    </source>
</evidence>
<evidence type="ECO:0000305" key="4"/>
<accession>A6MGX9</accession>
<organism>
    <name type="scientific">Demansia vestigiata</name>
    <name type="common">Lesser black whip snake</name>
    <name type="synonym">Demansia atra</name>
    <dbReference type="NCBI Taxonomy" id="412038"/>
    <lineage>
        <taxon>Eukaryota</taxon>
        <taxon>Metazoa</taxon>
        <taxon>Chordata</taxon>
        <taxon>Craniata</taxon>
        <taxon>Vertebrata</taxon>
        <taxon>Euteleostomi</taxon>
        <taxon>Lepidosauria</taxon>
        <taxon>Squamata</taxon>
        <taxon>Bifurcata</taxon>
        <taxon>Unidentata</taxon>
        <taxon>Episquamata</taxon>
        <taxon>Toxicofera</taxon>
        <taxon>Serpentes</taxon>
        <taxon>Colubroidea</taxon>
        <taxon>Elapidae</taxon>
        <taxon>Notechinae</taxon>
        <taxon>Demansia</taxon>
    </lineage>
</organism>
<name>VKT5_DEMVE</name>
<sequence length="83" mass="9127">MSSGGLLLLLGLLTLWAELTPVSSKDRPEFCELPPDRGTCMGFLQAFYYNPSQKGCLPFMFGGCKANPNNFKTLEECKRTCAA</sequence>
<comment type="function">
    <text evidence="1">Serine protease inhibitor.</text>
</comment>
<comment type="subcellular location">
    <subcellularLocation>
        <location evidence="1">Secreted</location>
    </subcellularLocation>
</comment>
<comment type="tissue specificity">
    <text>Expressed by the venom gland.</text>
</comment>
<comment type="similarity">
    <text evidence="4">Belongs to the venom Kunitz-type family.</text>
</comment>
<protein>
    <recommendedName>
        <fullName>Kunitz-type serine protease inhibitor vestiginin-5</fullName>
    </recommendedName>
    <alternativeName>
        <fullName>Vestiginin-3</fullName>
    </alternativeName>
</protein>
<keyword id="KW-1015">Disulfide bond</keyword>
<keyword id="KW-0646">Protease inhibitor</keyword>
<keyword id="KW-0964">Secreted</keyword>
<keyword id="KW-0722">Serine protease inhibitor</keyword>
<keyword id="KW-0732">Signal</keyword>
<reference key="1">
    <citation type="journal article" date="2007" name="J. Proteome Res.">
        <title>Diversity of toxic components from the venom of the evolutionarily distinct black whip snake, Demansia vestigiata.</title>
        <authorList>
            <person name="St Pierre L."/>
            <person name="Birrell G.W."/>
            <person name="Earl S.T.H."/>
            <person name="Wallis T.P."/>
            <person name="Gorman J.J."/>
            <person name="de Jersey J."/>
            <person name="Masci P.P."/>
            <person name="Lavin M.F."/>
        </authorList>
    </citation>
    <scope>NUCLEOTIDE SEQUENCE [MRNA]</scope>
    <source>
        <tissue>Venom gland</tissue>
    </source>
</reference>
<dbReference type="EMBL" id="EF025512">
    <property type="protein sequence ID" value="ABM86984.1"/>
    <property type="molecule type" value="mRNA"/>
</dbReference>
<dbReference type="SMR" id="A6MGX9"/>
<dbReference type="MEROPS" id="I02.052"/>
<dbReference type="GO" id="GO:0005615">
    <property type="term" value="C:extracellular space"/>
    <property type="evidence" value="ECO:0007669"/>
    <property type="project" value="TreeGrafter"/>
</dbReference>
<dbReference type="GO" id="GO:0004867">
    <property type="term" value="F:serine-type endopeptidase inhibitor activity"/>
    <property type="evidence" value="ECO:0007669"/>
    <property type="project" value="UniProtKB-KW"/>
</dbReference>
<dbReference type="CDD" id="cd22594">
    <property type="entry name" value="Kunitz_textilinin-like"/>
    <property type="match status" value="1"/>
</dbReference>
<dbReference type="FunFam" id="4.10.410.10:FF:000020">
    <property type="entry name" value="Collagen, type VI, alpha 3"/>
    <property type="match status" value="1"/>
</dbReference>
<dbReference type="Gene3D" id="4.10.410.10">
    <property type="entry name" value="Pancreatic trypsin inhibitor Kunitz domain"/>
    <property type="match status" value="1"/>
</dbReference>
<dbReference type="InterPro" id="IPR002223">
    <property type="entry name" value="Kunitz_BPTI"/>
</dbReference>
<dbReference type="InterPro" id="IPR036880">
    <property type="entry name" value="Kunitz_BPTI_sf"/>
</dbReference>
<dbReference type="InterPro" id="IPR020901">
    <property type="entry name" value="Prtase_inh_Kunz-CS"/>
</dbReference>
<dbReference type="InterPro" id="IPR050098">
    <property type="entry name" value="TFPI/VKTCI-like"/>
</dbReference>
<dbReference type="PANTHER" id="PTHR10083:SF383">
    <property type="entry name" value="BPTI_KUNITZ INHIBITOR DOMAIN-CONTAINING PROTEIN"/>
    <property type="match status" value="1"/>
</dbReference>
<dbReference type="PANTHER" id="PTHR10083">
    <property type="entry name" value="KUNITZ-TYPE PROTEASE INHIBITOR-RELATED"/>
    <property type="match status" value="1"/>
</dbReference>
<dbReference type="Pfam" id="PF00014">
    <property type="entry name" value="Kunitz_BPTI"/>
    <property type="match status" value="1"/>
</dbReference>
<dbReference type="PRINTS" id="PR00759">
    <property type="entry name" value="BASICPTASE"/>
</dbReference>
<dbReference type="SMART" id="SM00131">
    <property type="entry name" value="KU"/>
    <property type="match status" value="1"/>
</dbReference>
<dbReference type="SUPFAM" id="SSF57362">
    <property type="entry name" value="BPTI-like"/>
    <property type="match status" value="1"/>
</dbReference>
<dbReference type="PROSITE" id="PS00280">
    <property type="entry name" value="BPTI_KUNITZ_1"/>
    <property type="match status" value="1"/>
</dbReference>
<dbReference type="PROSITE" id="PS50279">
    <property type="entry name" value="BPTI_KUNITZ_2"/>
    <property type="match status" value="1"/>
</dbReference>
<feature type="signal peptide" evidence="2">
    <location>
        <begin position="1"/>
        <end position="24"/>
    </location>
</feature>
<feature type="chain" id="PRO_5000254136" description="Kunitz-type serine protease inhibitor vestiginin-5">
    <location>
        <begin position="25"/>
        <end position="83"/>
    </location>
</feature>
<feature type="domain" description="BPTI/Kunitz inhibitor" evidence="3">
    <location>
        <begin position="31"/>
        <end position="81"/>
    </location>
</feature>
<feature type="site" description="Reactive bond for chymotrypsin" evidence="1">
    <location>
        <begin position="41"/>
        <end position="42"/>
    </location>
</feature>
<feature type="disulfide bond" evidence="3">
    <location>
        <begin position="31"/>
        <end position="81"/>
    </location>
</feature>
<feature type="disulfide bond" evidence="3">
    <location>
        <begin position="40"/>
        <end position="64"/>
    </location>
</feature>
<feature type="disulfide bond" evidence="3">
    <location>
        <begin position="56"/>
        <end position="77"/>
    </location>
</feature>